<reference key="1">
    <citation type="journal article" date="1997" name="Plant Mol. Biol.">
        <title>The presence of a Sar1 gene family in Brassica campestris that suppresses a yeast vesicular transport mutation Sec12-1.</title>
        <authorList>
            <person name="Kim W.Y."/>
            <person name="Cheong N.E."/>
            <person name="Je D.Y."/>
            <person name="Kim M.G."/>
            <person name="Lim C.O."/>
            <person name="Bahk J.D."/>
            <person name="Cho M.J."/>
            <person name="Lee S.Y."/>
        </authorList>
    </citation>
    <scope>NUCLEOTIDE SEQUENCE [MRNA]</scope>
</reference>
<dbReference type="EC" id="3.6.5.2" evidence="2"/>
<dbReference type="EMBL" id="U55036">
    <property type="protein sequence ID" value="AAC49717.1"/>
    <property type="molecule type" value="mRNA"/>
</dbReference>
<dbReference type="SMR" id="O04267"/>
<dbReference type="Proteomes" id="UP000011750">
    <property type="component" value="Unplaced"/>
</dbReference>
<dbReference type="GO" id="GO:0030127">
    <property type="term" value="C:COPII vesicle coat"/>
    <property type="evidence" value="ECO:0000318"/>
    <property type="project" value="GO_Central"/>
</dbReference>
<dbReference type="GO" id="GO:0070971">
    <property type="term" value="C:endoplasmic reticulum exit site"/>
    <property type="evidence" value="ECO:0000318"/>
    <property type="project" value="GO_Central"/>
</dbReference>
<dbReference type="GO" id="GO:0005789">
    <property type="term" value="C:endoplasmic reticulum membrane"/>
    <property type="evidence" value="ECO:0007669"/>
    <property type="project" value="UniProtKB-SubCell"/>
</dbReference>
<dbReference type="GO" id="GO:0032580">
    <property type="term" value="C:Golgi cisterna membrane"/>
    <property type="evidence" value="ECO:0007669"/>
    <property type="project" value="UniProtKB-SubCell"/>
</dbReference>
<dbReference type="GO" id="GO:0005525">
    <property type="term" value="F:GTP binding"/>
    <property type="evidence" value="ECO:0007669"/>
    <property type="project" value="UniProtKB-KW"/>
</dbReference>
<dbReference type="GO" id="GO:0003924">
    <property type="term" value="F:GTPase activity"/>
    <property type="evidence" value="ECO:0000318"/>
    <property type="project" value="GO_Central"/>
</dbReference>
<dbReference type="GO" id="GO:0046872">
    <property type="term" value="F:metal ion binding"/>
    <property type="evidence" value="ECO:0007669"/>
    <property type="project" value="UniProtKB-KW"/>
</dbReference>
<dbReference type="GO" id="GO:0006888">
    <property type="term" value="P:endoplasmic reticulum to Golgi vesicle-mediated transport"/>
    <property type="evidence" value="ECO:0000318"/>
    <property type="project" value="GO_Central"/>
</dbReference>
<dbReference type="GO" id="GO:0006886">
    <property type="term" value="P:intracellular protein transport"/>
    <property type="evidence" value="ECO:0007669"/>
    <property type="project" value="InterPro"/>
</dbReference>
<dbReference type="GO" id="GO:0061024">
    <property type="term" value="P:membrane organization"/>
    <property type="evidence" value="ECO:0000318"/>
    <property type="project" value="GO_Central"/>
</dbReference>
<dbReference type="GO" id="GO:0003400">
    <property type="term" value="P:regulation of COPII vesicle coating"/>
    <property type="evidence" value="ECO:0000318"/>
    <property type="project" value="GO_Central"/>
</dbReference>
<dbReference type="GO" id="GO:0016050">
    <property type="term" value="P:vesicle organization"/>
    <property type="evidence" value="ECO:0000318"/>
    <property type="project" value="GO_Central"/>
</dbReference>
<dbReference type="CDD" id="cd00879">
    <property type="entry name" value="Sar1"/>
    <property type="match status" value="1"/>
</dbReference>
<dbReference type="FunFam" id="3.40.50.300:FF:000261">
    <property type="entry name" value="GTP-binding protein SAR1A"/>
    <property type="match status" value="1"/>
</dbReference>
<dbReference type="Gene3D" id="3.40.50.300">
    <property type="entry name" value="P-loop containing nucleotide triphosphate hydrolases"/>
    <property type="match status" value="1"/>
</dbReference>
<dbReference type="InterPro" id="IPR027417">
    <property type="entry name" value="P-loop_NTPase"/>
</dbReference>
<dbReference type="InterPro" id="IPR005225">
    <property type="entry name" value="Small_GTP-bd"/>
</dbReference>
<dbReference type="InterPro" id="IPR006689">
    <property type="entry name" value="Small_GTPase_ARF/SAR"/>
</dbReference>
<dbReference type="InterPro" id="IPR006687">
    <property type="entry name" value="Small_GTPase_SAR1"/>
</dbReference>
<dbReference type="NCBIfam" id="TIGR00231">
    <property type="entry name" value="small_GTP"/>
    <property type="match status" value="1"/>
</dbReference>
<dbReference type="PANTHER" id="PTHR45684">
    <property type="entry name" value="RE74312P"/>
    <property type="match status" value="1"/>
</dbReference>
<dbReference type="Pfam" id="PF00025">
    <property type="entry name" value="Arf"/>
    <property type="match status" value="1"/>
</dbReference>
<dbReference type="PRINTS" id="PR00328">
    <property type="entry name" value="SAR1GTPBP"/>
</dbReference>
<dbReference type="SMART" id="SM00177">
    <property type="entry name" value="ARF"/>
    <property type="match status" value="1"/>
</dbReference>
<dbReference type="SMART" id="SM00178">
    <property type="entry name" value="SAR"/>
    <property type="match status" value="1"/>
</dbReference>
<dbReference type="SUPFAM" id="SSF52540">
    <property type="entry name" value="P-loop containing nucleoside triphosphate hydrolases"/>
    <property type="match status" value="1"/>
</dbReference>
<dbReference type="PROSITE" id="PS51422">
    <property type="entry name" value="SAR1"/>
    <property type="match status" value="1"/>
</dbReference>
<sequence length="195" mass="22077">MFLFDWFYGILASLGLWQKEAKILFLGLDNAGKTTLLHMLKDERLVQHQPTQHPTSEELSIGKIKFKAFDLGGHQIARRVWKDYYAKVDAVVYLVDAYDKERFSESKKELDALLSDDALATVPFLILGNKIDNPYAASEDELRYHLGLTNFTTGKGKVTTAGGDSGVRPLEVFMCSIVRKMGYGEGFKWLSQYIN</sequence>
<organism>
    <name type="scientific">Brassica campestris</name>
    <name type="common">Field mustard</name>
    <dbReference type="NCBI Taxonomy" id="3711"/>
    <lineage>
        <taxon>Eukaryota</taxon>
        <taxon>Viridiplantae</taxon>
        <taxon>Streptophyta</taxon>
        <taxon>Embryophyta</taxon>
        <taxon>Tracheophyta</taxon>
        <taxon>Spermatophyta</taxon>
        <taxon>Magnoliopsida</taxon>
        <taxon>eudicotyledons</taxon>
        <taxon>Gunneridae</taxon>
        <taxon>Pentapetalae</taxon>
        <taxon>rosids</taxon>
        <taxon>malvids</taxon>
        <taxon>Brassicales</taxon>
        <taxon>Brassicaceae</taxon>
        <taxon>Brassiceae</taxon>
        <taxon>Brassica</taxon>
    </lineage>
</organism>
<comment type="function">
    <text evidence="2">Small GTPase that cycles between an active GTP-bound and an inactive GDP-bound state and mainly functions in vesicle-mediated endoplasmic reticulum (ER) to Golgi transport. The active GTP-bound form inserts into the endoplasmic reticulum membrane where it recruits the remainder of the coat protein complex II/COPII. The coat protein complex II assembling and polymerizing on endoplasmic reticulum membrane is responsible for both the sorting of cargos and the deformation and budding of membranes into vesicles destined to the Golgi.</text>
</comment>
<comment type="catalytic activity">
    <reaction evidence="2">
        <text>GTP + H2O = GDP + phosphate + H(+)</text>
        <dbReference type="Rhea" id="RHEA:19669"/>
        <dbReference type="ChEBI" id="CHEBI:15377"/>
        <dbReference type="ChEBI" id="CHEBI:15378"/>
        <dbReference type="ChEBI" id="CHEBI:37565"/>
        <dbReference type="ChEBI" id="CHEBI:43474"/>
        <dbReference type="ChEBI" id="CHEBI:58189"/>
        <dbReference type="EC" id="3.6.5.2"/>
    </reaction>
    <physiologicalReaction direction="left-to-right" evidence="2">
        <dbReference type="Rhea" id="RHEA:19670"/>
    </physiologicalReaction>
</comment>
<comment type="activity regulation">
    <text evidence="1">Small GTPases activation is mediated by guanine exchange factors (GEF), while inactivation through hydrolysis of the bound GTP is stimulated by GTPase activating proteins (GAP).</text>
</comment>
<comment type="subunit">
    <text evidence="2">Homodimer; upon association with membrane. Part of the coat protein complex II/COPII, composed of SEC23/24 and SEC13/31 heterodimers, that it helps recruit and assemble on endoplasmic reticulum (ER) membranes at ER exit site.</text>
</comment>
<comment type="subcellular location">
    <subcellularLocation>
        <location evidence="2">Endoplasmic reticulum membrane</location>
        <topology evidence="1">Peripheral membrane protein</topology>
    </subcellularLocation>
    <subcellularLocation>
        <location evidence="1">Golgi apparatus</location>
        <location evidence="1">Golgi stack membrane</location>
        <topology evidence="1">Peripheral membrane protein</topology>
    </subcellularLocation>
    <text evidence="2">Active at endoplasmic reticulum exit sites (ERES) where it inserts into the membrane and recruits the remainder of the coat protein complex II/COPII.</text>
</comment>
<comment type="tissue specificity">
    <text>Expressed in most tissues.</text>
</comment>
<comment type="similarity">
    <text evidence="3">Belongs to the small GTPase superfamily. SAR1 family.</text>
</comment>
<name>SAR1B_BRACM</name>
<feature type="chain" id="PRO_0000206268" description="Small COPII coat GTPase SAR1B">
    <location>
        <begin position="1"/>
        <end position="195"/>
    </location>
</feature>
<feature type="region of interest" description="Mediates recruitment to ER membranes" evidence="1">
    <location>
        <begin position="10"/>
        <end position="14"/>
    </location>
</feature>
<feature type="short sequence motif" description="STAR; SAR1-N-terminal activation recruitment. Required for the activation and subsequent recruitment to ER membrane" evidence="1">
    <location>
        <begin position="2"/>
        <end position="4"/>
    </location>
</feature>
<feature type="binding site" evidence="2">
    <location>
        <position position="29"/>
    </location>
    <ligand>
        <name>Mg(2+)</name>
        <dbReference type="ChEBI" id="CHEBI:18420"/>
    </ligand>
</feature>
<feature type="binding site" evidence="2">
    <location>
        <position position="30"/>
    </location>
    <ligand>
        <name>GDP</name>
        <dbReference type="ChEBI" id="CHEBI:58189"/>
    </ligand>
</feature>
<feature type="binding site" evidence="2">
    <location>
        <position position="30"/>
    </location>
    <ligand>
        <name>GTP</name>
        <dbReference type="ChEBI" id="CHEBI:37565"/>
    </ligand>
</feature>
<feature type="binding site" evidence="2">
    <location>
        <position position="31"/>
    </location>
    <ligand>
        <name>GDP</name>
        <dbReference type="ChEBI" id="CHEBI:58189"/>
    </ligand>
</feature>
<feature type="binding site" evidence="2">
    <location>
        <position position="32"/>
    </location>
    <ligand>
        <name>GDP</name>
        <dbReference type="ChEBI" id="CHEBI:58189"/>
    </ligand>
</feature>
<feature type="binding site" evidence="2">
    <location>
        <position position="32"/>
    </location>
    <ligand>
        <name>GTP</name>
        <dbReference type="ChEBI" id="CHEBI:37565"/>
    </ligand>
</feature>
<feature type="binding site" evidence="2">
    <location>
        <position position="33"/>
    </location>
    <ligand>
        <name>GDP</name>
        <dbReference type="ChEBI" id="CHEBI:58189"/>
    </ligand>
</feature>
<feature type="binding site" evidence="2">
    <location>
        <position position="33"/>
    </location>
    <ligand>
        <name>GTP</name>
        <dbReference type="ChEBI" id="CHEBI:37565"/>
    </ligand>
</feature>
<feature type="binding site" evidence="2">
    <location>
        <position position="34"/>
    </location>
    <ligand>
        <name>GDP</name>
        <dbReference type="ChEBI" id="CHEBI:58189"/>
    </ligand>
</feature>
<feature type="binding site" evidence="2">
    <location>
        <position position="34"/>
    </location>
    <ligand>
        <name>GTP</name>
        <dbReference type="ChEBI" id="CHEBI:37565"/>
    </ligand>
</feature>
<feature type="binding site" evidence="2">
    <location>
        <position position="35"/>
    </location>
    <ligand>
        <name>GDP</name>
        <dbReference type="ChEBI" id="CHEBI:58189"/>
    </ligand>
</feature>
<feature type="binding site" evidence="2">
    <location>
        <position position="35"/>
    </location>
    <ligand>
        <name>GTP</name>
        <dbReference type="ChEBI" id="CHEBI:37565"/>
    </ligand>
</feature>
<feature type="binding site" evidence="2">
    <location>
        <position position="53"/>
    </location>
    <ligand>
        <name>GDP</name>
        <dbReference type="ChEBI" id="CHEBI:58189"/>
    </ligand>
</feature>
<feature type="binding site" evidence="2">
    <location>
        <position position="70"/>
    </location>
    <ligand>
        <name>Mg(2+)</name>
        <dbReference type="ChEBI" id="CHEBI:18420"/>
    </ligand>
</feature>
<feature type="binding site" evidence="2">
    <location>
        <position position="129"/>
    </location>
    <ligand>
        <name>GDP</name>
        <dbReference type="ChEBI" id="CHEBI:58189"/>
    </ligand>
</feature>
<feature type="binding site" evidence="2">
    <location>
        <position position="129"/>
    </location>
    <ligand>
        <name>GTP</name>
        <dbReference type="ChEBI" id="CHEBI:37565"/>
    </ligand>
</feature>
<feature type="binding site" evidence="2">
    <location>
        <position position="130"/>
    </location>
    <ligand>
        <name>GDP</name>
        <dbReference type="ChEBI" id="CHEBI:58189"/>
    </ligand>
</feature>
<feature type="binding site" evidence="2">
    <location>
        <position position="130"/>
    </location>
    <ligand>
        <name>GTP</name>
        <dbReference type="ChEBI" id="CHEBI:37565"/>
    </ligand>
</feature>
<feature type="binding site" evidence="2">
    <location>
        <position position="132"/>
    </location>
    <ligand>
        <name>GDP</name>
        <dbReference type="ChEBI" id="CHEBI:58189"/>
    </ligand>
</feature>
<feature type="binding site" evidence="2">
    <location>
        <position position="132"/>
    </location>
    <ligand>
        <name>GTP</name>
        <dbReference type="ChEBI" id="CHEBI:37565"/>
    </ligand>
</feature>
<feature type="binding site" evidence="2">
    <location>
        <position position="177"/>
    </location>
    <ligand>
        <name>GDP</name>
        <dbReference type="ChEBI" id="CHEBI:58189"/>
    </ligand>
</feature>
<feature type="binding site" evidence="2">
    <location>
        <position position="177"/>
    </location>
    <ligand>
        <name>GTP</name>
        <dbReference type="ChEBI" id="CHEBI:37565"/>
    </ligand>
</feature>
<protein>
    <recommendedName>
        <fullName evidence="2">Small COPII coat GTPase SAR1B</fullName>
        <ecNumber evidence="2">3.6.5.2</ecNumber>
    </recommendedName>
    <alternativeName>
        <fullName>GTP-binding protein SAR1B</fullName>
    </alternativeName>
</protein>
<gene>
    <name type="primary">SAR1B</name>
</gene>
<accession>O04267</accession>
<proteinExistence type="evidence at transcript level"/>
<evidence type="ECO:0000250" key="1">
    <source>
        <dbReference type="UniProtKB" id="Q9QVY3"/>
    </source>
</evidence>
<evidence type="ECO:0000250" key="2">
    <source>
        <dbReference type="UniProtKB" id="Q9Y6B6"/>
    </source>
</evidence>
<evidence type="ECO:0000305" key="3"/>
<keyword id="KW-0256">Endoplasmic reticulum</keyword>
<keyword id="KW-0931">ER-Golgi transport</keyword>
<keyword id="KW-0333">Golgi apparatus</keyword>
<keyword id="KW-0342">GTP-binding</keyword>
<keyword id="KW-0378">Hydrolase</keyword>
<keyword id="KW-0460">Magnesium</keyword>
<keyword id="KW-0472">Membrane</keyword>
<keyword id="KW-0479">Metal-binding</keyword>
<keyword id="KW-0547">Nucleotide-binding</keyword>
<keyword id="KW-0653">Protein transport</keyword>
<keyword id="KW-1185">Reference proteome</keyword>
<keyword id="KW-0813">Transport</keyword>